<name>NADB_MYCBO</name>
<evidence type="ECO:0000250" key="1">
    <source>
        <dbReference type="UniProtKB" id="P10902"/>
    </source>
</evidence>
<evidence type="ECO:0000305" key="2"/>
<proteinExistence type="inferred from homology"/>
<sequence length="527" mass="53785">MAGPAWRDAADVVVIGTGVAGLAAALAADRAGRSVVVLSKAAQTHVTATHYAQGGIAVVLPDNDDSVDAHVADTLAAGAGLCDPDAVYSIVADGYRAVTDLVGAGARLDESVPGRWALTREGGHSRRRIVHAGGDATGAEVQRALQDAAGMLDIRTGHVALRVLHDGTAVTGLLVVRPDGCGIISAPSVILATGGLGHLYSATTNPAGSTGDGIALGLWAGVAVSDLEFIQFHPTMLFAGRAGGRRPLITEAIRGEGAILVDRQGNSITAGVHPMGDLAPRDVVAAAIDARLKATGDPCVYLDARGIEGFASRFPTVTASCRAAGIDPVRQPIPVVPGAHYSCGGIVTDVYGQTELLGLYAAGEVARTGLHGANRLASNSLLEGLVVGGRAGKAAAAHAAAAGRSRATSSATWPEPISYTALDRGDLQRAMSRDASMYRAAAGLHRLCDSLSGAQVRDVACRRDFEDVALTLVAQSVTAAALARTESRGCHHRAEYPCTVPEQARSIVVRGADDANAVCVQALVAVC</sequence>
<accession>P65500</accession>
<accession>A0A1R3XYS2</accession>
<accession>O06595</accession>
<accession>X2BIT0</accession>
<gene>
    <name type="primary">nadB</name>
    <name type="ordered locus">BQ2027_MB1621</name>
</gene>
<comment type="function">
    <text evidence="1">Catalyzes the oxidation of L-aspartate to iminoaspartate, the first step in the de novo biosynthesis of NAD(+).</text>
</comment>
<comment type="catalytic activity">
    <reaction evidence="1">
        <text>L-aspartate + O2 = iminosuccinate + H2O2</text>
        <dbReference type="Rhea" id="RHEA:25876"/>
        <dbReference type="ChEBI" id="CHEBI:15379"/>
        <dbReference type="ChEBI" id="CHEBI:16240"/>
        <dbReference type="ChEBI" id="CHEBI:29991"/>
        <dbReference type="ChEBI" id="CHEBI:77875"/>
        <dbReference type="EC" id="1.4.3.16"/>
    </reaction>
    <physiologicalReaction direction="left-to-right" evidence="1">
        <dbReference type="Rhea" id="RHEA:25877"/>
    </physiologicalReaction>
</comment>
<comment type="cofactor">
    <cofactor evidence="1">
        <name>FAD</name>
        <dbReference type="ChEBI" id="CHEBI:57692"/>
    </cofactor>
    <text evidence="1">Binds 1 FAD per subunit.</text>
</comment>
<comment type="pathway">
    <text evidence="1">Cofactor biosynthesis; NAD(+) biosynthesis; iminoaspartate from L-aspartate (oxidase route): step 1/1.</text>
</comment>
<comment type="subcellular location">
    <subcellularLocation>
        <location evidence="1">Cytoplasm</location>
    </subcellularLocation>
</comment>
<comment type="similarity">
    <text evidence="2">Belongs to the FAD-dependent oxidoreductase 2 family. NadB subfamily.</text>
</comment>
<feature type="chain" id="PRO_0000184390" description="L-aspartate oxidase">
    <location>
        <begin position="1"/>
        <end position="527"/>
    </location>
</feature>
<feature type="active site" description="Proton donor/acceptor" evidence="1">
    <location>
        <position position="281"/>
    </location>
</feature>
<feature type="binding site" evidence="1">
    <location>
        <begin position="17"/>
        <end position="20"/>
    </location>
    <ligand>
        <name>FAD</name>
        <dbReference type="ChEBI" id="CHEBI:57692"/>
    </ligand>
</feature>
<feature type="binding site" evidence="1">
    <location>
        <position position="40"/>
    </location>
    <ligand>
        <name>FAD</name>
        <dbReference type="ChEBI" id="CHEBI:57692"/>
    </ligand>
</feature>
<feature type="binding site" evidence="1">
    <location>
        <begin position="48"/>
        <end position="55"/>
    </location>
    <ligand>
        <name>FAD</name>
        <dbReference type="ChEBI" id="CHEBI:57692"/>
    </ligand>
</feature>
<feature type="binding site" evidence="1">
    <location>
        <position position="212"/>
    </location>
    <ligand>
        <name>FAD</name>
        <dbReference type="ChEBI" id="CHEBI:57692"/>
    </ligand>
</feature>
<feature type="binding site" evidence="1">
    <location>
        <position position="364"/>
    </location>
    <ligand>
        <name>FAD</name>
        <dbReference type="ChEBI" id="CHEBI:57692"/>
    </ligand>
</feature>
<feature type="binding site" evidence="1">
    <location>
        <begin position="380"/>
        <end position="381"/>
    </location>
    <ligand>
        <name>FAD</name>
        <dbReference type="ChEBI" id="CHEBI:57692"/>
    </ligand>
</feature>
<feature type="site" description="Important in orienting the L-aspartate substrate" evidence="1">
    <location>
        <position position="121"/>
    </location>
</feature>
<dbReference type="EC" id="1.4.3.16" evidence="1"/>
<dbReference type="EMBL" id="LT708304">
    <property type="protein sequence ID" value="SIU00225.1"/>
    <property type="molecule type" value="Genomic_DNA"/>
</dbReference>
<dbReference type="RefSeq" id="NP_855274.1">
    <property type="nucleotide sequence ID" value="NC_002945.3"/>
</dbReference>
<dbReference type="RefSeq" id="WP_003901204.1">
    <property type="nucleotide sequence ID" value="NC_002945.4"/>
</dbReference>
<dbReference type="SMR" id="P65500"/>
<dbReference type="KEGG" id="mbo:BQ2027_MB1621"/>
<dbReference type="PATRIC" id="fig|233413.5.peg.1770"/>
<dbReference type="UniPathway" id="UPA00253">
    <property type="reaction ID" value="UER00326"/>
</dbReference>
<dbReference type="Proteomes" id="UP000001419">
    <property type="component" value="Chromosome"/>
</dbReference>
<dbReference type="GO" id="GO:0005737">
    <property type="term" value="C:cytoplasm"/>
    <property type="evidence" value="ECO:0007669"/>
    <property type="project" value="UniProtKB-SubCell"/>
</dbReference>
<dbReference type="GO" id="GO:0008734">
    <property type="term" value="F:L-aspartate oxidase activity"/>
    <property type="evidence" value="ECO:0007669"/>
    <property type="project" value="UniProtKB-EC"/>
</dbReference>
<dbReference type="GO" id="GO:0000166">
    <property type="term" value="F:nucleotide binding"/>
    <property type="evidence" value="ECO:0007669"/>
    <property type="project" value="UniProtKB-KW"/>
</dbReference>
<dbReference type="GO" id="GO:0033765">
    <property type="term" value="F:steroid dehydrogenase activity, acting on the CH-CH group of donors"/>
    <property type="evidence" value="ECO:0007669"/>
    <property type="project" value="UniProtKB-ARBA"/>
</dbReference>
<dbReference type="GO" id="GO:0034628">
    <property type="term" value="P:'de novo' NAD biosynthetic process from L-aspartate"/>
    <property type="evidence" value="ECO:0007669"/>
    <property type="project" value="TreeGrafter"/>
</dbReference>
<dbReference type="FunFam" id="3.90.700.10:FF:000002">
    <property type="entry name" value="L-aspartate oxidase"/>
    <property type="match status" value="1"/>
</dbReference>
<dbReference type="Gene3D" id="3.50.50.60">
    <property type="entry name" value="FAD/NAD(P)-binding domain"/>
    <property type="match status" value="1"/>
</dbReference>
<dbReference type="Gene3D" id="1.20.58.100">
    <property type="entry name" value="Fumarate reductase/succinate dehydrogenase flavoprotein-like, C-terminal domain"/>
    <property type="match status" value="1"/>
</dbReference>
<dbReference type="Gene3D" id="3.90.700.10">
    <property type="entry name" value="Succinate dehydrogenase/fumarate reductase flavoprotein, catalytic domain"/>
    <property type="match status" value="1"/>
</dbReference>
<dbReference type="InterPro" id="IPR003953">
    <property type="entry name" value="FAD-dep_OxRdtase_2_FAD-bd"/>
</dbReference>
<dbReference type="InterPro" id="IPR036188">
    <property type="entry name" value="FAD/NAD-bd_sf"/>
</dbReference>
<dbReference type="InterPro" id="IPR037099">
    <property type="entry name" value="Fum_R/Succ_DH_flav-like_C_sf"/>
</dbReference>
<dbReference type="InterPro" id="IPR015939">
    <property type="entry name" value="Fum_Rdtase/Succ_DH_flav-like_C"/>
</dbReference>
<dbReference type="InterPro" id="IPR005288">
    <property type="entry name" value="NadB"/>
</dbReference>
<dbReference type="InterPro" id="IPR027477">
    <property type="entry name" value="Succ_DH/fumarate_Rdtase_cat_sf"/>
</dbReference>
<dbReference type="NCBIfam" id="TIGR00551">
    <property type="entry name" value="nadB"/>
    <property type="match status" value="1"/>
</dbReference>
<dbReference type="NCBIfam" id="NF005867">
    <property type="entry name" value="PRK07804.1"/>
    <property type="match status" value="1"/>
</dbReference>
<dbReference type="PANTHER" id="PTHR42716">
    <property type="entry name" value="L-ASPARTATE OXIDASE"/>
    <property type="match status" value="1"/>
</dbReference>
<dbReference type="PANTHER" id="PTHR42716:SF2">
    <property type="entry name" value="L-ASPARTATE OXIDASE, CHLOROPLASTIC"/>
    <property type="match status" value="1"/>
</dbReference>
<dbReference type="Pfam" id="PF00890">
    <property type="entry name" value="FAD_binding_2"/>
    <property type="match status" value="1"/>
</dbReference>
<dbReference type="Pfam" id="PF02910">
    <property type="entry name" value="Succ_DH_flav_C"/>
    <property type="match status" value="1"/>
</dbReference>
<dbReference type="PRINTS" id="PR00368">
    <property type="entry name" value="FADPNR"/>
</dbReference>
<dbReference type="PRINTS" id="PR00411">
    <property type="entry name" value="PNDRDTASEI"/>
</dbReference>
<dbReference type="SUPFAM" id="SSF51905">
    <property type="entry name" value="FAD/NAD(P)-binding domain"/>
    <property type="match status" value="1"/>
</dbReference>
<dbReference type="SUPFAM" id="SSF46977">
    <property type="entry name" value="Succinate dehydrogenase/fumarate reductase flavoprotein C-terminal domain"/>
    <property type="match status" value="1"/>
</dbReference>
<dbReference type="SUPFAM" id="SSF56425">
    <property type="entry name" value="Succinate dehydrogenase/fumarate reductase flavoprotein, catalytic domain"/>
    <property type="match status" value="1"/>
</dbReference>
<keyword id="KW-0963">Cytoplasm</keyword>
<keyword id="KW-0274">FAD</keyword>
<keyword id="KW-0285">Flavoprotein</keyword>
<keyword id="KW-0547">Nucleotide-binding</keyword>
<keyword id="KW-0560">Oxidoreductase</keyword>
<keyword id="KW-0662">Pyridine nucleotide biosynthesis</keyword>
<keyword id="KW-1185">Reference proteome</keyword>
<organism>
    <name type="scientific">Mycobacterium bovis (strain ATCC BAA-935 / AF2122/97)</name>
    <dbReference type="NCBI Taxonomy" id="233413"/>
    <lineage>
        <taxon>Bacteria</taxon>
        <taxon>Bacillati</taxon>
        <taxon>Actinomycetota</taxon>
        <taxon>Actinomycetes</taxon>
        <taxon>Mycobacteriales</taxon>
        <taxon>Mycobacteriaceae</taxon>
        <taxon>Mycobacterium</taxon>
        <taxon>Mycobacterium tuberculosis complex</taxon>
    </lineage>
</organism>
<reference key="1">
    <citation type="journal article" date="2003" name="Proc. Natl. Acad. Sci. U.S.A.">
        <title>The complete genome sequence of Mycobacterium bovis.</title>
        <authorList>
            <person name="Garnier T."/>
            <person name="Eiglmeier K."/>
            <person name="Camus J.-C."/>
            <person name="Medina N."/>
            <person name="Mansoor H."/>
            <person name="Pryor M."/>
            <person name="Duthoy S."/>
            <person name="Grondin S."/>
            <person name="Lacroix C."/>
            <person name="Monsempe C."/>
            <person name="Simon S."/>
            <person name="Harris B."/>
            <person name="Atkin R."/>
            <person name="Doggett J."/>
            <person name="Mayes R."/>
            <person name="Keating L."/>
            <person name="Wheeler P.R."/>
            <person name="Parkhill J."/>
            <person name="Barrell B.G."/>
            <person name="Cole S.T."/>
            <person name="Gordon S.V."/>
            <person name="Hewinson R.G."/>
        </authorList>
    </citation>
    <scope>NUCLEOTIDE SEQUENCE [LARGE SCALE GENOMIC DNA]</scope>
    <source>
        <strain>ATCC BAA-935 / AF2122/97</strain>
    </source>
</reference>
<reference key="2">
    <citation type="journal article" date="2017" name="Genome Announc.">
        <title>Updated reference genome sequence and annotation of Mycobacterium bovis AF2122/97.</title>
        <authorList>
            <person name="Malone K.M."/>
            <person name="Farrell D."/>
            <person name="Stuber T.P."/>
            <person name="Schubert O.T."/>
            <person name="Aebersold R."/>
            <person name="Robbe-Austerman S."/>
            <person name="Gordon S.V."/>
        </authorList>
    </citation>
    <scope>NUCLEOTIDE SEQUENCE [LARGE SCALE GENOMIC DNA]</scope>
    <scope>GENOME REANNOTATION</scope>
    <source>
        <strain>ATCC BAA-935 / AF2122/97</strain>
    </source>
</reference>
<protein>
    <recommendedName>
        <fullName evidence="1">L-aspartate oxidase</fullName>
        <shortName evidence="1">LASPO</shortName>
        <ecNumber evidence="1">1.4.3.16</ecNumber>
    </recommendedName>
    <alternativeName>
        <fullName>Quinolinate synthase B</fullName>
    </alternativeName>
</protein>